<evidence type="ECO:0000255" key="1">
    <source>
        <dbReference type="HAMAP-Rule" id="MF_00518"/>
    </source>
</evidence>
<gene>
    <name evidence="1" type="primary">dtd</name>
    <name type="ordered locus">XOO0558</name>
</gene>
<reference key="1">
    <citation type="journal article" date="2005" name="Jpn. Agric. Res. Q.">
        <title>Genome sequence of Xanthomonas oryzae pv. oryzae suggests contribution of large numbers of effector genes and insertion sequences to its race diversity.</title>
        <authorList>
            <person name="Ochiai H."/>
            <person name="Inoue Y."/>
            <person name="Takeya M."/>
            <person name="Sasaki A."/>
            <person name="Kaku H."/>
        </authorList>
    </citation>
    <scope>NUCLEOTIDE SEQUENCE [LARGE SCALE GENOMIC DNA]</scope>
    <source>
        <strain>MAFF 311018</strain>
    </source>
</reference>
<feature type="chain" id="PRO_0000259330" description="D-aminoacyl-tRNA deacylase">
    <location>
        <begin position="1"/>
        <end position="146"/>
    </location>
</feature>
<feature type="short sequence motif" description="Gly-cisPro motif, important for rejection of L-amino acids" evidence="1">
    <location>
        <begin position="138"/>
        <end position="139"/>
    </location>
</feature>
<comment type="function">
    <text evidence="1">An aminoacyl-tRNA editing enzyme that deacylates mischarged D-aminoacyl-tRNAs. Also deacylates mischarged glycyl-tRNA(Ala), protecting cells against glycine mischarging by AlaRS. Acts via tRNA-based rather than protein-based catalysis; rejects L-amino acids rather than detecting D-amino acids in the active site. By recycling D-aminoacyl-tRNA to D-amino acids and free tRNA molecules, this enzyme counteracts the toxicity associated with the formation of D-aminoacyl-tRNA entities in vivo and helps enforce protein L-homochirality.</text>
</comment>
<comment type="catalytic activity">
    <reaction evidence="1">
        <text>glycyl-tRNA(Ala) + H2O = tRNA(Ala) + glycine + H(+)</text>
        <dbReference type="Rhea" id="RHEA:53744"/>
        <dbReference type="Rhea" id="RHEA-COMP:9657"/>
        <dbReference type="Rhea" id="RHEA-COMP:13640"/>
        <dbReference type="ChEBI" id="CHEBI:15377"/>
        <dbReference type="ChEBI" id="CHEBI:15378"/>
        <dbReference type="ChEBI" id="CHEBI:57305"/>
        <dbReference type="ChEBI" id="CHEBI:78442"/>
        <dbReference type="ChEBI" id="CHEBI:78522"/>
        <dbReference type="EC" id="3.1.1.96"/>
    </reaction>
</comment>
<comment type="catalytic activity">
    <reaction evidence="1">
        <text>a D-aminoacyl-tRNA + H2O = a tRNA + a D-alpha-amino acid + H(+)</text>
        <dbReference type="Rhea" id="RHEA:13953"/>
        <dbReference type="Rhea" id="RHEA-COMP:10123"/>
        <dbReference type="Rhea" id="RHEA-COMP:10124"/>
        <dbReference type="ChEBI" id="CHEBI:15377"/>
        <dbReference type="ChEBI" id="CHEBI:15378"/>
        <dbReference type="ChEBI" id="CHEBI:59871"/>
        <dbReference type="ChEBI" id="CHEBI:78442"/>
        <dbReference type="ChEBI" id="CHEBI:79333"/>
        <dbReference type="EC" id="3.1.1.96"/>
    </reaction>
</comment>
<comment type="subunit">
    <text evidence="1">Homodimer.</text>
</comment>
<comment type="subcellular location">
    <subcellularLocation>
        <location evidence="1">Cytoplasm</location>
    </subcellularLocation>
</comment>
<comment type="domain">
    <text evidence="1">A Gly-cisPro motif from one monomer fits into the active site of the other monomer to allow specific chiral rejection of L-amino acids.</text>
</comment>
<comment type="similarity">
    <text evidence="1">Belongs to the DTD family.</text>
</comment>
<organism>
    <name type="scientific">Xanthomonas oryzae pv. oryzae (strain MAFF 311018)</name>
    <dbReference type="NCBI Taxonomy" id="342109"/>
    <lineage>
        <taxon>Bacteria</taxon>
        <taxon>Pseudomonadati</taxon>
        <taxon>Pseudomonadota</taxon>
        <taxon>Gammaproteobacteria</taxon>
        <taxon>Lysobacterales</taxon>
        <taxon>Lysobacteraceae</taxon>
        <taxon>Xanthomonas</taxon>
    </lineage>
</organism>
<protein>
    <recommendedName>
        <fullName evidence="1">D-aminoacyl-tRNA deacylase</fullName>
        <shortName evidence="1">DTD</shortName>
        <ecNumber evidence="1">3.1.1.96</ecNumber>
    </recommendedName>
    <alternativeName>
        <fullName evidence="1">Gly-tRNA(Ala) deacylase</fullName>
    </alternativeName>
</protein>
<sequence length="146" mass="15761">MLALIQRVTRASVTVDDRIVGQIGPGLLALIGVEPGDRDAQTRRLAERLLSYRVFSDDAGKMNRSLTDTNGGLLLVSQFTLAADTSSGNRPGFSTAAPPEEAERAFNQLVDICREKHRGGVETGRFGAHMVVDLVNDGPVTFLLRP</sequence>
<name>DTD_XANOM</name>
<accession>Q2P814</accession>
<keyword id="KW-0963">Cytoplasm</keyword>
<keyword id="KW-0378">Hydrolase</keyword>
<keyword id="KW-0694">RNA-binding</keyword>
<keyword id="KW-0820">tRNA-binding</keyword>
<proteinExistence type="inferred from homology"/>
<dbReference type="EC" id="3.1.1.96" evidence="1"/>
<dbReference type="EMBL" id="AP008229">
    <property type="protein sequence ID" value="BAE67313.1"/>
    <property type="molecule type" value="Genomic_DNA"/>
</dbReference>
<dbReference type="RefSeq" id="WP_011257505.1">
    <property type="nucleotide sequence ID" value="NC_007705.1"/>
</dbReference>
<dbReference type="SMR" id="Q2P814"/>
<dbReference type="GeneID" id="77335929"/>
<dbReference type="KEGG" id="xom:XOO0558"/>
<dbReference type="HOGENOM" id="CLU_076901_1_1_6"/>
<dbReference type="GO" id="GO:0005737">
    <property type="term" value="C:cytoplasm"/>
    <property type="evidence" value="ECO:0007669"/>
    <property type="project" value="UniProtKB-SubCell"/>
</dbReference>
<dbReference type="GO" id="GO:0051500">
    <property type="term" value="F:D-tyrosyl-tRNA(Tyr) deacylase activity"/>
    <property type="evidence" value="ECO:0007669"/>
    <property type="project" value="TreeGrafter"/>
</dbReference>
<dbReference type="GO" id="GO:0106026">
    <property type="term" value="F:Gly-tRNA(Ala) deacylase activity"/>
    <property type="evidence" value="ECO:0007669"/>
    <property type="project" value="UniProtKB-UniRule"/>
</dbReference>
<dbReference type="GO" id="GO:0043908">
    <property type="term" value="F:Ser(Gly)-tRNA(Ala) hydrolase activity"/>
    <property type="evidence" value="ECO:0007669"/>
    <property type="project" value="UniProtKB-UniRule"/>
</dbReference>
<dbReference type="GO" id="GO:0000049">
    <property type="term" value="F:tRNA binding"/>
    <property type="evidence" value="ECO:0007669"/>
    <property type="project" value="UniProtKB-UniRule"/>
</dbReference>
<dbReference type="GO" id="GO:0019478">
    <property type="term" value="P:D-amino acid catabolic process"/>
    <property type="evidence" value="ECO:0007669"/>
    <property type="project" value="UniProtKB-UniRule"/>
</dbReference>
<dbReference type="CDD" id="cd00563">
    <property type="entry name" value="Dtyr_deacylase"/>
    <property type="match status" value="1"/>
</dbReference>
<dbReference type="FunFam" id="3.50.80.10:FF:000001">
    <property type="entry name" value="D-aminoacyl-tRNA deacylase"/>
    <property type="match status" value="1"/>
</dbReference>
<dbReference type="Gene3D" id="3.50.80.10">
    <property type="entry name" value="D-tyrosyl-tRNA(Tyr) deacylase"/>
    <property type="match status" value="1"/>
</dbReference>
<dbReference type="HAMAP" id="MF_00518">
    <property type="entry name" value="Deacylase_Dtd"/>
    <property type="match status" value="1"/>
</dbReference>
<dbReference type="InterPro" id="IPR003732">
    <property type="entry name" value="Daa-tRNA_deacyls_DTD"/>
</dbReference>
<dbReference type="InterPro" id="IPR023509">
    <property type="entry name" value="DTD-like_sf"/>
</dbReference>
<dbReference type="NCBIfam" id="TIGR00256">
    <property type="entry name" value="D-aminoacyl-tRNA deacylase"/>
    <property type="match status" value="1"/>
</dbReference>
<dbReference type="PANTHER" id="PTHR10472:SF5">
    <property type="entry name" value="D-AMINOACYL-TRNA DEACYLASE 1"/>
    <property type="match status" value="1"/>
</dbReference>
<dbReference type="PANTHER" id="PTHR10472">
    <property type="entry name" value="D-TYROSYL-TRNA TYR DEACYLASE"/>
    <property type="match status" value="1"/>
</dbReference>
<dbReference type="Pfam" id="PF02580">
    <property type="entry name" value="Tyr_Deacylase"/>
    <property type="match status" value="1"/>
</dbReference>
<dbReference type="SUPFAM" id="SSF69500">
    <property type="entry name" value="DTD-like"/>
    <property type="match status" value="1"/>
</dbReference>